<keyword id="KW-0472">Membrane</keyword>
<keyword id="KW-0602">Photosynthesis</keyword>
<keyword id="KW-0604">Photosystem II</keyword>
<keyword id="KW-1185">Reference proteome</keyword>
<keyword id="KW-0793">Thylakoid</keyword>
<comment type="subunit">
    <text evidence="1">Part of the photosystem II complex.</text>
</comment>
<comment type="subcellular location">
    <subcellularLocation>
        <location evidence="1">Cellular thylakoid membrane</location>
        <topology evidence="1">Peripheral membrane protein</topology>
        <orientation evidence="1">Cytoplasmic side</orientation>
    </subcellularLocation>
</comment>
<comment type="similarity">
    <text evidence="1">Belongs to the Psb28 family.</text>
</comment>
<reference key="1">
    <citation type="journal article" date="2008" name="Proc. Natl. Acad. Sci. U.S.A.">
        <title>Niche adaptation and genome expansion in the chlorophyll d-producing cyanobacterium Acaryochloris marina.</title>
        <authorList>
            <person name="Swingley W.D."/>
            <person name="Chen M."/>
            <person name="Cheung P.C."/>
            <person name="Conrad A.L."/>
            <person name="Dejesa L.C."/>
            <person name="Hao J."/>
            <person name="Honchak B.M."/>
            <person name="Karbach L.E."/>
            <person name="Kurdoglu A."/>
            <person name="Lahiri S."/>
            <person name="Mastrian S.D."/>
            <person name="Miyashita H."/>
            <person name="Page L."/>
            <person name="Ramakrishna P."/>
            <person name="Satoh S."/>
            <person name="Sattley W.M."/>
            <person name="Shimada Y."/>
            <person name="Taylor H.L."/>
            <person name="Tomo T."/>
            <person name="Tsuchiya T."/>
            <person name="Wang Z.T."/>
            <person name="Raymond J."/>
            <person name="Mimuro M."/>
            <person name="Blankenship R.E."/>
            <person name="Touchman J.W."/>
        </authorList>
    </citation>
    <scope>NUCLEOTIDE SEQUENCE [LARGE SCALE GENOMIC DNA]</scope>
    <source>
        <strain>MBIC 11017</strain>
    </source>
</reference>
<name>PSB28_ACAM1</name>
<gene>
    <name evidence="1" type="primary">psb28</name>
    <name type="ordered locus">AM1_5552</name>
</gene>
<accession>B0CE32</accession>
<organism>
    <name type="scientific">Acaryochloris marina (strain MBIC 11017)</name>
    <dbReference type="NCBI Taxonomy" id="329726"/>
    <lineage>
        <taxon>Bacteria</taxon>
        <taxon>Bacillati</taxon>
        <taxon>Cyanobacteriota</taxon>
        <taxon>Cyanophyceae</taxon>
        <taxon>Acaryochloridales</taxon>
        <taxon>Acaryochloridaceae</taxon>
        <taxon>Acaryochloris</taxon>
    </lineage>
</organism>
<sequence length="111" mass="12689">MSAAIQFIRGVDEEVIPDVRLTRAKDGSSGRAIFYFENPNLIQEGKLEVMGMYLQDEEGELTTLDVSAKFVNGKPHAIEANYDMKSEEEWDRFMRFMNRYAESHGLGFSKS</sequence>
<dbReference type="EMBL" id="CP000828">
    <property type="protein sequence ID" value="ABW30506.1"/>
    <property type="molecule type" value="Genomic_DNA"/>
</dbReference>
<dbReference type="RefSeq" id="WP_010476862.1">
    <property type="nucleotide sequence ID" value="NC_009925.1"/>
</dbReference>
<dbReference type="SMR" id="B0CE32"/>
<dbReference type="STRING" id="329726.AM1_5552"/>
<dbReference type="KEGG" id="amr:AM1_5552"/>
<dbReference type="eggNOG" id="ENOG5031GDS">
    <property type="taxonomic scope" value="Bacteria"/>
</dbReference>
<dbReference type="HOGENOM" id="CLU_137323_1_0_3"/>
<dbReference type="OrthoDB" id="559598at2"/>
<dbReference type="Proteomes" id="UP000000268">
    <property type="component" value="Chromosome"/>
</dbReference>
<dbReference type="GO" id="GO:0009654">
    <property type="term" value="C:photosystem II oxygen evolving complex"/>
    <property type="evidence" value="ECO:0007669"/>
    <property type="project" value="InterPro"/>
</dbReference>
<dbReference type="GO" id="GO:0031676">
    <property type="term" value="C:plasma membrane-derived thylakoid membrane"/>
    <property type="evidence" value="ECO:0007669"/>
    <property type="project" value="UniProtKB-SubCell"/>
</dbReference>
<dbReference type="GO" id="GO:0015979">
    <property type="term" value="P:photosynthesis"/>
    <property type="evidence" value="ECO:0007669"/>
    <property type="project" value="UniProtKB-UniRule"/>
</dbReference>
<dbReference type="Gene3D" id="2.40.30.220">
    <property type="entry name" value="Photosystem II Psb28"/>
    <property type="match status" value="1"/>
</dbReference>
<dbReference type="HAMAP" id="MF_01370">
    <property type="entry name" value="PSII_Psb28"/>
    <property type="match status" value="1"/>
</dbReference>
<dbReference type="InterPro" id="IPR038676">
    <property type="entry name" value="Psb28_c1_sf"/>
</dbReference>
<dbReference type="InterPro" id="IPR005610">
    <property type="entry name" value="PSII_Psb28_class-1"/>
</dbReference>
<dbReference type="NCBIfam" id="TIGR03047">
    <property type="entry name" value="PS_II_psb28"/>
    <property type="match status" value="1"/>
</dbReference>
<dbReference type="PANTHER" id="PTHR34963">
    <property type="match status" value="1"/>
</dbReference>
<dbReference type="PANTHER" id="PTHR34963:SF2">
    <property type="entry name" value="PHOTOSYSTEM II REACTION CENTER PSB28 PROTEIN, CHLOROPLASTIC"/>
    <property type="match status" value="1"/>
</dbReference>
<dbReference type="Pfam" id="PF03912">
    <property type="entry name" value="Psb28"/>
    <property type="match status" value="1"/>
</dbReference>
<feature type="chain" id="PRO_1000087238" description="Photosystem II reaction center Psb28 protein">
    <location>
        <begin position="1"/>
        <end position="111"/>
    </location>
</feature>
<proteinExistence type="inferred from homology"/>
<evidence type="ECO:0000255" key="1">
    <source>
        <dbReference type="HAMAP-Rule" id="MF_01370"/>
    </source>
</evidence>
<protein>
    <recommendedName>
        <fullName evidence="1">Photosystem II reaction center Psb28 protein</fullName>
    </recommendedName>
    <alternativeName>
        <fullName evidence="1">Photosystem II 13 kDa protein</fullName>
    </alternativeName>
    <alternativeName>
        <fullName evidence="1">Photosystem II reaction center W protein</fullName>
    </alternativeName>
</protein>